<protein>
    <recommendedName>
        <fullName>Putative uncharacterized protein DDB_G0285557</fullName>
    </recommendedName>
</protein>
<reference key="1">
    <citation type="journal article" date="2005" name="Nature">
        <title>The genome of the social amoeba Dictyostelium discoideum.</title>
        <authorList>
            <person name="Eichinger L."/>
            <person name="Pachebat J.A."/>
            <person name="Gloeckner G."/>
            <person name="Rajandream M.A."/>
            <person name="Sucgang R."/>
            <person name="Berriman M."/>
            <person name="Song J."/>
            <person name="Olsen R."/>
            <person name="Szafranski K."/>
            <person name="Xu Q."/>
            <person name="Tunggal B."/>
            <person name="Kummerfeld S."/>
            <person name="Madera M."/>
            <person name="Konfortov B.A."/>
            <person name="Rivero F."/>
            <person name="Bankier A.T."/>
            <person name="Lehmann R."/>
            <person name="Hamlin N."/>
            <person name="Davies R."/>
            <person name="Gaudet P."/>
            <person name="Fey P."/>
            <person name="Pilcher K."/>
            <person name="Chen G."/>
            <person name="Saunders D."/>
            <person name="Sodergren E.J."/>
            <person name="Davis P."/>
            <person name="Kerhornou A."/>
            <person name="Nie X."/>
            <person name="Hall N."/>
            <person name="Anjard C."/>
            <person name="Hemphill L."/>
            <person name="Bason N."/>
            <person name="Farbrother P."/>
            <person name="Desany B."/>
            <person name="Just E."/>
            <person name="Morio T."/>
            <person name="Rost R."/>
            <person name="Churcher C.M."/>
            <person name="Cooper J."/>
            <person name="Haydock S."/>
            <person name="van Driessche N."/>
            <person name="Cronin A."/>
            <person name="Goodhead I."/>
            <person name="Muzny D.M."/>
            <person name="Mourier T."/>
            <person name="Pain A."/>
            <person name="Lu M."/>
            <person name="Harper D."/>
            <person name="Lindsay R."/>
            <person name="Hauser H."/>
            <person name="James K.D."/>
            <person name="Quiles M."/>
            <person name="Madan Babu M."/>
            <person name="Saito T."/>
            <person name="Buchrieser C."/>
            <person name="Wardroper A."/>
            <person name="Felder M."/>
            <person name="Thangavelu M."/>
            <person name="Johnson D."/>
            <person name="Knights A."/>
            <person name="Loulseged H."/>
            <person name="Mungall K.L."/>
            <person name="Oliver K."/>
            <person name="Price C."/>
            <person name="Quail M.A."/>
            <person name="Urushihara H."/>
            <person name="Hernandez J."/>
            <person name="Rabbinowitsch E."/>
            <person name="Steffen D."/>
            <person name="Sanders M."/>
            <person name="Ma J."/>
            <person name="Kohara Y."/>
            <person name="Sharp S."/>
            <person name="Simmonds M.N."/>
            <person name="Spiegler S."/>
            <person name="Tivey A."/>
            <person name="Sugano S."/>
            <person name="White B."/>
            <person name="Walker D."/>
            <person name="Woodward J.R."/>
            <person name="Winckler T."/>
            <person name="Tanaka Y."/>
            <person name="Shaulsky G."/>
            <person name="Schleicher M."/>
            <person name="Weinstock G.M."/>
            <person name="Rosenthal A."/>
            <person name="Cox E.C."/>
            <person name="Chisholm R.L."/>
            <person name="Gibbs R.A."/>
            <person name="Loomis W.F."/>
            <person name="Platzer M."/>
            <person name="Kay R.R."/>
            <person name="Williams J.G."/>
            <person name="Dear P.H."/>
            <person name="Noegel A.A."/>
            <person name="Barrell B.G."/>
            <person name="Kuspa A."/>
        </authorList>
    </citation>
    <scope>NUCLEOTIDE SEQUENCE [LARGE SCALE GENOMIC DNA]</scope>
    <source>
        <strain>AX4</strain>
    </source>
</reference>
<name>Y6568_DICDI</name>
<accession>Q54N19</accession>
<gene>
    <name type="ORF">DDB_G0285557</name>
</gene>
<sequence>MQNRYLPYGKMNQCENNYGGNDNILNNNNYNNDDRYNNYKNNNIIENNNYTYNNGGGSKNDKKNIQRNNNSNYNNNNNNNNNNNNNNNNNNNNNNNKNNNNNNYNYNKNNYNKKTYTYRGRVRKYATALFFISTDFILMDDIQIQLKKPIHFYQKYLLIHGNSDNGIKIVLPYKYIGEIKLERFETSFNLSFSTTVTTGRQSARYVIKSLKNEFLIDFKNDLSSVFGNVSFFETDHSLQEMYKQIQFPSQSQPSSFSSSSSSSSIQLSPSPSSSSSPKL</sequence>
<keyword id="KW-1185">Reference proteome</keyword>
<proteinExistence type="predicted"/>
<feature type="chain" id="PRO_0000350808" description="Putative uncharacterized protein DDB_G0285557">
    <location>
        <begin position="1"/>
        <end position="279"/>
    </location>
</feature>
<feature type="region of interest" description="Disordered" evidence="1">
    <location>
        <begin position="50"/>
        <end position="109"/>
    </location>
</feature>
<feature type="region of interest" description="Disordered" evidence="1">
    <location>
        <begin position="249"/>
        <end position="279"/>
    </location>
</feature>
<feature type="compositionally biased region" description="Low complexity" evidence="1">
    <location>
        <begin position="68"/>
        <end position="109"/>
    </location>
</feature>
<organism>
    <name type="scientific">Dictyostelium discoideum</name>
    <name type="common">Social amoeba</name>
    <dbReference type="NCBI Taxonomy" id="44689"/>
    <lineage>
        <taxon>Eukaryota</taxon>
        <taxon>Amoebozoa</taxon>
        <taxon>Evosea</taxon>
        <taxon>Eumycetozoa</taxon>
        <taxon>Dictyostelia</taxon>
        <taxon>Dictyosteliales</taxon>
        <taxon>Dictyosteliaceae</taxon>
        <taxon>Dictyostelium</taxon>
    </lineage>
</organism>
<evidence type="ECO:0000256" key="1">
    <source>
        <dbReference type="SAM" id="MobiDB-lite"/>
    </source>
</evidence>
<dbReference type="EMBL" id="AAFI02000079">
    <property type="protein sequence ID" value="EAL64616.1"/>
    <property type="molecule type" value="Genomic_DNA"/>
</dbReference>
<dbReference type="RefSeq" id="XP_638124.1">
    <property type="nucleotide sequence ID" value="XM_633032.1"/>
</dbReference>
<dbReference type="PaxDb" id="44689-DDB0186568"/>
<dbReference type="EnsemblProtists" id="EAL64616">
    <property type="protein sequence ID" value="EAL64616"/>
    <property type="gene ID" value="DDB_G0285557"/>
</dbReference>
<dbReference type="GeneID" id="8625173"/>
<dbReference type="KEGG" id="ddi:DDB_G0285557"/>
<dbReference type="dictyBase" id="DDB_G0285557"/>
<dbReference type="VEuPathDB" id="AmoebaDB:DDB_G0285557"/>
<dbReference type="eggNOG" id="ENOG502RI84">
    <property type="taxonomic scope" value="Eukaryota"/>
</dbReference>
<dbReference type="HOGENOM" id="CLU_999019_0_0_1"/>
<dbReference type="InParanoid" id="Q54N19"/>
<dbReference type="OMA" id="ENDHAQQ"/>
<dbReference type="PRO" id="PR:Q54N19"/>
<dbReference type="Proteomes" id="UP000002195">
    <property type="component" value="Chromosome 4"/>
</dbReference>
<dbReference type="PANTHER" id="PTHR16148:SF14">
    <property type="entry name" value="MYND-TYPE DOMAIN-CONTAINING PROTEIN"/>
    <property type="match status" value="1"/>
</dbReference>
<dbReference type="PANTHER" id="PTHR16148">
    <property type="entry name" value="NF-KAPPA-B-REPRESSING FACTOR-RELATED"/>
    <property type="match status" value="1"/>
</dbReference>